<reference key="1">
    <citation type="journal article" date="2007" name="Mol. Phylogenet. Evol.">
        <title>Phylogenetic and evolutionary implications of complete chloroplast genome sequences of four early-diverging angiosperms: Buxus (Buxaceae), Chloranthus (Chloranthaceae), Dioscorea (Dioscoreaceae), and Illicium (Schisandraceae).</title>
        <authorList>
            <person name="Hansen D.R."/>
            <person name="Dastidar S.G."/>
            <person name="Cai Z."/>
            <person name="Penaflor C."/>
            <person name="Kuehl J.V."/>
            <person name="Boore J.L."/>
            <person name="Jansen R.K."/>
        </authorList>
    </citation>
    <scope>NUCLEOTIDE SEQUENCE [LARGE SCALE GENOMIC DNA]</scope>
</reference>
<name>RK2_DIOEL</name>
<organism>
    <name type="scientific">Dioscorea elephantipes</name>
    <name type="common">Elephant's foot yam</name>
    <name type="synonym">Testudinaria elephantipes</name>
    <dbReference type="NCBI Taxonomy" id="145284"/>
    <lineage>
        <taxon>Eukaryota</taxon>
        <taxon>Viridiplantae</taxon>
        <taxon>Streptophyta</taxon>
        <taxon>Embryophyta</taxon>
        <taxon>Tracheophyta</taxon>
        <taxon>Spermatophyta</taxon>
        <taxon>Magnoliopsida</taxon>
        <taxon>Liliopsida</taxon>
        <taxon>Dioscoreales</taxon>
        <taxon>Dioscoreaceae</taxon>
        <taxon>Dioscorea</taxon>
    </lineage>
</organism>
<geneLocation type="chloroplast"/>
<comment type="subunit">
    <text evidence="1">Part of the 50S ribosomal subunit.</text>
</comment>
<comment type="subcellular location">
    <subcellularLocation>
        <location>Plastid</location>
        <location>Chloroplast</location>
    </subcellularLocation>
</comment>
<comment type="similarity">
    <text evidence="4">Belongs to the universal ribosomal protein uL2 family.</text>
</comment>
<protein>
    <recommendedName>
        <fullName evidence="2">Large ribosomal subunit protein uL2cz/uL2cy</fullName>
    </recommendedName>
    <alternativeName>
        <fullName evidence="4">50S ribosomal protein L2, chloroplastic</fullName>
    </alternativeName>
</protein>
<sequence length="274" mass="29745">MAIHLYKTSTPSTRNGAVDSQVKSNLRNNLISGQHRCGKGRNARGIITAGHRGGGHKRLYRKIDFRRNEKDISGRIVTIEYDPNRNAYICLIHYGDGEKRYILHPRGAIIGDTIVSGTEVPISMGNALPLSTDMPLGTAIHNIEITLGKGGQLARAAGAVAKLIAKEGKSATLRLPSGEVRLISKNCLATVGQVGNVGVNQKSLGRAGSKCWLGKRPVVRGVVMNPVDHPHGGGEGRAPIGRKKPTTPWGYPALGRRSRKRKKYSDSFILRRRK</sequence>
<proteinExistence type="inferred from homology"/>
<accession>A6MMP9</accession>
<feature type="chain" id="PRO_0000310075" description="Large ribosomal subunit protein uL2cz/uL2cy">
    <location>
        <begin position="1"/>
        <end position="274"/>
    </location>
</feature>
<feature type="region of interest" description="Disordered" evidence="3">
    <location>
        <begin position="225"/>
        <end position="274"/>
    </location>
</feature>
<dbReference type="EMBL" id="EF380353">
    <property type="protein sequence ID" value="ABR01471.1"/>
    <property type="molecule type" value="Genomic_DNA"/>
</dbReference>
<dbReference type="EMBL" id="EF380353">
    <property type="protein sequence ID" value="ABR01494.1"/>
    <property type="molecule type" value="Genomic_DNA"/>
</dbReference>
<dbReference type="SMR" id="A6MMP9"/>
<dbReference type="GO" id="GO:0009507">
    <property type="term" value="C:chloroplast"/>
    <property type="evidence" value="ECO:0007669"/>
    <property type="project" value="UniProtKB-SubCell"/>
</dbReference>
<dbReference type="GO" id="GO:0005762">
    <property type="term" value="C:mitochondrial large ribosomal subunit"/>
    <property type="evidence" value="ECO:0007669"/>
    <property type="project" value="TreeGrafter"/>
</dbReference>
<dbReference type="GO" id="GO:0019843">
    <property type="term" value="F:rRNA binding"/>
    <property type="evidence" value="ECO:0007669"/>
    <property type="project" value="UniProtKB-UniRule"/>
</dbReference>
<dbReference type="GO" id="GO:0003735">
    <property type="term" value="F:structural constituent of ribosome"/>
    <property type="evidence" value="ECO:0007669"/>
    <property type="project" value="InterPro"/>
</dbReference>
<dbReference type="GO" id="GO:0016740">
    <property type="term" value="F:transferase activity"/>
    <property type="evidence" value="ECO:0007669"/>
    <property type="project" value="InterPro"/>
</dbReference>
<dbReference type="GO" id="GO:0032543">
    <property type="term" value="P:mitochondrial translation"/>
    <property type="evidence" value="ECO:0007669"/>
    <property type="project" value="TreeGrafter"/>
</dbReference>
<dbReference type="FunFam" id="4.10.950.10:FF:000001">
    <property type="entry name" value="50S ribosomal protein L2"/>
    <property type="match status" value="1"/>
</dbReference>
<dbReference type="FunFam" id="2.30.30.30:FF:000008">
    <property type="entry name" value="50S ribosomal protein L2, chloroplastic"/>
    <property type="match status" value="1"/>
</dbReference>
<dbReference type="FunFam" id="2.40.50.140:FF:000029">
    <property type="entry name" value="50S ribosomal protein L2, chloroplastic"/>
    <property type="match status" value="1"/>
</dbReference>
<dbReference type="Gene3D" id="2.30.30.30">
    <property type="match status" value="1"/>
</dbReference>
<dbReference type="Gene3D" id="2.40.50.140">
    <property type="entry name" value="Nucleic acid-binding proteins"/>
    <property type="match status" value="1"/>
</dbReference>
<dbReference type="Gene3D" id="4.10.950.10">
    <property type="entry name" value="Ribosomal protein L2, domain 3"/>
    <property type="match status" value="1"/>
</dbReference>
<dbReference type="HAMAP" id="MF_01320_B">
    <property type="entry name" value="Ribosomal_uL2_B"/>
    <property type="match status" value="1"/>
</dbReference>
<dbReference type="InterPro" id="IPR012340">
    <property type="entry name" value="NA-bd_OB-fold"/>
</dbReference>
<dbReference type="InterPro" id="IPR014722">
    <property type="entry name" value="Rib_uL2_dom2"/>
</dbReference>
<dbReference type="InterPro" id="IPR002171">
    <property type="entry name" value="Ribosomal_uL2"/>
</dbReference>
<dbReference type="InterPro" id="IPR005880">
    <property type="entry name" value="Ribosomal_uL2_bac/org-type"/>
</dbReference>
<dbReference type="InterPro" id="IPR022669">
    <property type="entry name" value="Ribosomal_uL2_C"/>
</dbReference>
<dbReference type="InterPro" id="IPR022671">
    <property type="entry name" value="Ribosomal_uL2_CS"/>
</dbReference>
<dbReference type="InterPro" id="IPR014726">
    <property type="entry name" value="Ribosomal_uL2_dom3"/>
</dbReference>
<dbReference type="InterPro" id="IPR022666">
    <property type="entry name" value="Ribosomal_uL2_RNA-bd_dom"/>
</dbReference>
<dbReference type="InterPro" id="IPR008991">
    <property type="entry name" value="Translation_prot_SH3-like_sf"/>
</dbReference>
<dbReference type="NCBIfam" id="TIGR01171">
    <property type="entry name" value="rplB_bact"/>
    <property type="match status" value="1"/>
</dbReference>
<dbReference type="PANTHER" id="PTHR13691:SF5">
    <property type="entry name" value="LARGE RIBOSOMAL SUBUNIT PROTEIN UL2M"/>
    <property type="match status" value="1"/>
</dbReference>
<dbReference type="PANTHER" id="PTHR13691">
    <property type="entry name" value="RIBOSOMAL PROTEIN L2"/>
    <property type="match status" value="1"/>
</dbReference>
<dbReference type="Pfam" id="PF00181">
    <property type="entry name" value="Ribosomal_L2"/>
    <property type="match status" value="1"/>
</dbReference>
<dbReference type="Pfam" id="PF03947">
    <property type="entry name" value="Ribosomal_L2_C"/>
    <property type="match status" value="1"/>
</dbReference>
<dbReference type="PIRSF" id="PIRSF002158">
    <property type="entry name" value="Ribosomal_L2"/>
    <property type="match status" value="1"/>
</dbReference>
<dbReference type="SMART" id="SM01383">
    <property type="entry name" value="Ribosomal_L2"/>
    <property type="match status" value="1"/>
</dbReference>
<dbReference type="SMART" id="SM01382">
    <property type="entry name" value="Ribosomal_L2_C"/>
    <property type="match status" value="1"/>
</dbReference>
<dbReference type="SUPFAM" id="SSF50249">
    <property type="entry name" value="Nucleic acid-binding proteins"/>
    <property type="match status" value="1"/>
</dbReference>
<dbReference type="SUPFAM" id="SSF50104">
    <property type="entry name" value="Translation proteins SH3-like domain"/>
    <property type="match status" value="1"/>
</dbReference>
<dbReference type="PROSITE" id="PS00467">
    <property type="entry name" value="RIBOSOMAL_L2"/>
    <property type="match status" value="1"/>
</dbReference>
<keyword id="KW-0150">Chloroplast</keyword>
<keyword id="KW-0934">Plastid</keyword>
<keyword id="KW-0687">Ribonucleoprotein</keyword>
<keyword id="KW-0689">Ribosomal protein</keyword>
<gene>
    <name type="primary">rpl2-A</name>
</gene>
<gene>
    <name type="primary">rpl2-B</name>
</gene>
<evidence type="ECO:0000250" key="1"/>
<evidence type="ECO:0000255" key="2">
    <source>
        <dbReference type="HAMAP-Rule" id="MF_01320"/>
    </source>
</evidence>
<evidence type="ECO:0000256" key="3">
    <source>
        <dbReference type="SAM" id="MobiDB-lite"/>
    </source>
</evidence>
<evidence type="ECO:0000305" key="4"/>